<organism>
    <name type="scientific">Xanthomonas axonopodis pv. citri (strain 306)</name>
    <dbReference type="NCBI Taxonomy" id="190486"/>
    <lineage>
        <taxon>Bacteria</taxon>
        <taxon>Pseudomonadati</taxon>
        <taxon>Pseudomonadota</taxon>
        <taxon>Gammaproteobacteria</taxon>
        <taxon>Lysobacterales</taxon>
        <taxon>Lysobacteraceae</taxon>
        <taxon>Xanthomonas</taxon>
    </lineage>
</organism>
<comment type="function">
    <text evidence="1">Catalyzes the phosphorylation of pantothenate (Pan), the first step in CoA biosynthesis.</text>
</comment>
<comment type="catalytic activity">
    <reaction evidence="1">
        <text>(R)-pantothenate + ATP = (R)-4'-phosphopantothenate + ADP + H(+)</text>
        <dbReference type="Rhea" id="RHEA:16373"/>
        <dbReference type="ChEBI" id="CHEBI:10986"/>
        <dbReference type="ChEBI" id="CHEBI:15378"/>
        <dbReference type="ChEBI" id="CHEBI:29032"/>
        <dbReference type="ChEBI" id="CHEBI:30616"/>
        <dbReference type="ChEBI" id="CHEBI:456216"/>
        <dbReference type="EC" id="2.7.1.33"/>
    </reaction>
</comment>
<comment type="cofactor">
    <cofactor evidence="1">
        <name>NH4(+)</name>
        <dbReference type="ChEBI" id="CHEBI:28938"/>
    </cofactor>
    <cofactor evidence="1">
        <name>K(+)</name>
        <dbReference type="ChEBI" id="CHEBI:29103"/>
    </cofactor>
    <text evidence="1">A monovalent cation. Ammonium or potassium.</text>
</comment>
<comment type="pathway">
    <text evidence="1">Cofactor biosynthesis; coenzyme A biosynthesis; CoA from (R)-pantothenate: step 1/5.</text>
</comment>
<comment type="subunit">
    <text evidence="1">Homodimer.</text>
</comment>
<comment type="subcellular location">
    <subcellularLocation>
        <location evidence="1">Cytoplasm</location>
    </subcellularLocation>
</comment>
<comment type="similarity">
    <text evidence="1">Belongs to the type III pantothenate kinase family.</text>
</comment>
<sequence length="242" mass="25045">MSEWLFDLGNSRFKYAPLHGNRAGQVQAWAHGAEAMDAAALAALPSGRIAYVASVAAPALTQRMIACLQERFTQVRIVRTTAECAGIRIAYADPSRFGVDRFLALLGARGDAPVLVAGVGTALTIDVLGADGLHHGGRIAASPTTMREALHARAVQLPASGGDYVELAIDTDDALTSGCDGAAVALIERSLQHAQRSLGVPVRLLVHGGGAPPLLPLLPDATFRAALVLDGLATWATAASSP</sequence>
<name>COAX_XANAC</name>
<proteinExistence type="inferred from homology"/>
<accession>Q8PFG5</accession>
<reference key="1">
    <citation type="journal article" date="2002" name="Nature">
        <title>Comparison of the genomes of two Xanthomonas pathogens with differing host specificities.</title>
        <authorList>
            <person name="da Silva A.C.R."/>
            <person name="Ferro J.A."/>
            <person name="Reinach F.C."/>
            <person name="Farah C.S."/>
            <person name="Furlan L.R."/>
            <person name="Quaggio R.B."/>
            <person name="Monteiro-Vitorello C.B."/>
            <person name="Van Sluys M.A."/>
            <person name="Almeida N.F. Jr."/>
            <person name="Alves L.M.C."/>
            <person name="do Amaral A.M."/>
            <person name="Bertolini M.C."/>
            <person name="Camargo L.E.A."/>
            <person name="Camarotte G."/>
            <person name="Cannavan F."/>
            <person name="Cardozo J."/>
            <person name="Chambergo F."/>
            <person name="Ciapina L.P."/>
            <person name="Cicarelli R.M.B."/>
            <person name="Coutinho L.L."/>
            <person name="Cursino-Santos J.R."/>
            <person name="El-Dorry H."/>
            <person name="Faria J.B."/>
            <person name="Ferreira A.J.S."/>
            <person name="Ferreira R.C.C."/>
            <person name="Ferro M.I.T."/>
            <person name="Formighieri E.F."/>
            <person name="Franco M.C."/>
            <person name="Greggio C.C."/>
            <person name="Gruber A."/>
            <person name="Katsuyama A.M."/>
            <person name="Kishi L.T."/>
            <person name="Leite R.P."/>
            <person name="Lemos E.G.M."/>
            <person name="Lemos M.V.F."/>
            <person name="Locali E.C."/>
            <person name="Machado M.A."/>
            <person name="Madeira A.M.B.N."/>
            <person name="Martinez-Rossi N.M."/>
            <person name="Martins E.C."/>
            <person name="Meidanis J."/>
            <person name="Menck C.F.M."/>
            <person name="Miyaki C.Y."/>
            <person name="Moon D.H."/>
            <person name="Moreira L.M."/>
            <person name="Novo M.T.M."/>
            <person name="Okura V.K."/>
            <person name="Oliveira M.C."/>
            <person name="Oliveira V.R."/>
            <person name="Pereira H.A."/>
            <person name="Rossi A."/>
            <person name="Sena J.A.D."/>
            <person name="Silva C."/>
            <person name="de Souza R.F."/>
            <person name="Spinola L.A.F."/>
            <person name="Takita M.A."/>
            <person name="Tamura R.E."/>
            <person name="Teixeira E.C."/>
            <person name="Tezza R.I.D."/>
            <person name="Trindade dos Santos M."/>
            <person name="Truffi D."/>
            <person name="Tsai S.M."/>
            <person name="White F.F."/>
            <person name="Setubal J.C."/>
            <person name="Kitajima J.P."/>
        </authorList>
    </citation>
    <scope>NUCLEOTIDE SEQUENCE [LARGE SCALE GENOMIC DNA]</scope>
    <source>
        <strain>306</strain>
    </source>
</reference>
<keyword id="KW-0067">ATP-binding</keyword>
<keyword id="KW-0173">Coenzyme A biosynthesis</keyword>
<keyword id="KW-0963">Cytoplasm</keyword>
<keyword id="KW-0418">Kinase</keyword>
<keyword id="KW-0547">Nucleotide-binding</keyword>
<keyword id="KW-0630">Potassium</keyword>
<keyword id="KW-0808">Transferase</keyword>
<protein>
    <recommendedName>
        <fullName evidence="1">Type III pantothenate kinase</fullName>
        <ecNumber evidence="1">2.7.1.33</ecNumber>
    </recommendedName>
    <alternativeName>
        <fullName evidence="1">PanK-III</fullName>
    </alternativeName>
    <alternativeName>
        <fullName evidence="1">Pantothenic acid kinase</fullName>
    </alternativeName>
</protein>
<gene>
    <name evidence="1" type="primary">coaX</name>
    <name type="ordered locus">XAC4017</name>
</gene>
<feature type="chain" id="PRO_0000270908" description="Type III pantothenate kinase">
    <location>
        <begin position="1"/>
        <end position="242"/>
    </location>
</feature>
<feature type="active site" description="Proton acceptor" evidence="1">
    <location>
        <position position="100"/>
    </location>
</feature>
<feature type="binding site" evidence="1">
    <location>
        <begin position="7"/>
        <end position="14"/>
    </location>
    <ligand>
        <name>ATP</name>
        <dbReference type="ChEBI" id="CHEBI:30616"/>
    </ligand>
</feature>
<feature type="binding site" evidence="1">
    <location>
        <position position="91"/>
    </location>
    <ligand>
        <name>substrate</name>
    </ligand>
</feature>
<feature type="binding site" evidence="1">
    <location>
        <begin position="98"/>
        <end position="101"/>
    </location>
    <ligand>
        <name>substrate</name>
    </ligand>
</feature>
<feature type="binding site" evidence="1">
    <location>
        <position position="121"/>
    </location>
    <ligand>
        <name>ATP</name>
        <dbReference type="ChEBI" id="CHEBI:30616"/>
    </ligand>
</feature>
<feature type="binding site" evidence="1">
    <location>
        <position position="171"/>
    </location>
    <ligand>
        <name>substrate</name>
    </ligand>
</feature>
<evidence type="ECO:0000255" key="1">
    <source>
        <dbReference type="HAMAP-Rule" id="MF_01274"/>
    </source>
</evidence>
<dbReference type="EC" id="2.7.1.33" evidence="1"/>
<dbReference type="EMBL" id="AE008923">
    <property type="protein sequence ID" value="AAM38852.1"/>
    <property type="molecule type" value="Genomic_DNA"/>
</dbReference>
<dbReference type="RefSeq" id="WP_003486621.1">
    <property type="nucleotide sequence ID" value="NC_003919.1"/>
</dbReference>
<dbReference type="SMR" id="Q8PFG5"/>
<dbReference type="KEGG" id="xac:XAC4017"/>
<dbReference type="eggNOG" id="COG1521">
    <property type="taxonomic scope" value="Bacteria"/>
</dbReference>
<dbReference type="HOGENOM" id="CLU_066627_0_0_6"/>
<dbReference type="UniPathway" id="UPA00241">
    <property type="reaction ID" value="UER00352"/>
</dbReference>
<dbReference type="Proteomes" id="UP000000576">
    <property type="component" value="Chromosome"/>
</dbReference>
<dbReference type="GO" id="GO:0005737">
    <property type="term" value="C:cytoplasm"/>
    <property type="evidence" value="ECO:0007669"/>
    <property type="project" value="UniProtKB-SubCell"/>
</dbReference>
<dbReference type="GO" id="GO:0005524">
    <property type="term" value="F:ATP binding"/>
    <property type="evidence" value="ECO:0007669"/>
    <property type="project" value="UniProtKB-UniRule"/>
</dbReference>
<dbReference type="GO" id="GO:0004594">
    <property type="term" value="F:pantothenate kinase activity"/>
    <property type="evidence" value="ECO:0007669"/>
    <property type="project" value="UniProtKB-UniRule"/>
</dbReference>
<dbReference type="GO" id="GO:0015937">
    <property type="term" value="P:coenzyme A biosynthetic process"/>
    <property type="evidence" value="ECO:0007669"/>
    <property type="project" value="UniProtKB-UniRule"/>
</dbReference>
<dbReference type="CDD" id="cd24015">
    <property type="entry name" value="ASKHA_NBD_PanK-III"/>
    <property type="match status" value="1"/>
</dbReference>
<dbReference type="Gene3D" id="3.30.420.40">
    <property type="match status" value="2"/>
</dbReference>
<dbReference type="HAMAP" id="MF_01274">
    <property type="entry name" value="Pantothen_kinase_3"/>
    <property type="match status" value="1"/>
</dbReference>
<dbReference type="InterPro" id="IPR043129">
    <property type="entry name" value="ATPase_NBD"/>
</dbReference>
<dbReference type="InterPro" id="IPR004619">
    <property type="entry name" value="Type_III_PanK"/>
</dbReference>
<dbReference type="NCBIfam" id="TIGR00671">
    <property type="entry name" value="baf"/>
    <property type="match status" value="1"/>
</dbReference>
<dbReference type="NCBIfam" id="NF009864">
    <property type="entry name" value="PRK13327.1"/>
    <property type="match status" value="1"/>
</dbReference>
<dbReference type="PANTHER" id="PTHR34265">
    <property type="entry name" value="TYPE III PANTOTHENATE KINASE"/>
    <property type="match status" value="1"/>
</dbReference>
<dbReference type="PANTHER" id="PTHR34265:SF1">
    <property type="entry name" value="TYPE III PANTOTHENATE KINASE"/>
    <property type="match status" value="1"/>
</dbReference>
<dbReference type="Pfam" id="PF03309">
    <property type="entry name" value="Pan_kinase"/>
    <property type="match status" value="1"/>
</dbReference>
<dbReference type="SUPFAM" id="SSF53067">
    <property type="entry name" value="Actin-like ATPase domain"/>
    <property type="match status" value="2"/>
</dbReference>